<evidence type="ECO:0000255" key="1">
    <source>
        <dbReference type="PROSITE-ProRule" id="PRU00303"/>
    </source>
</evidence>
<evidence type="ECO:0000256" key="2">
    <source>
        <dbReference type="SAM" id="MobiDB-lite"/>
    </source>
</evidence>
<feature type="signal peptide" evidence="1">
    <location>
        <begin position="1"/>
        <end position="17"/>
    </location>
</feature>
<feature type="chain" id="PRO_0000296177" description="Uncharacterized lipoprotein SAS2259">
    <location>
        <begin position="18"/>
        <end position="204"/>
    </location>
</feature>
<feature type="region of interest" description="Disordered" evidence="2">
    <location>
        <begin position="17"/>
        <end position="100"/>
    </location>
</feature>
<feature type="compositionally biased region" description="Basic and acidic residues" evidence="2">
    <location>
        <begin position="23"/>
        <end position="70"/>
    </location>
</feature>
<feature type="compositionally biased region" description="Low complexity" evidence="2">
    <location>
        <begin position="71"/>
        <end position="100"/>
    </location>
</feature>
<feature type="lipid moiety-binding region" description="N-palmitoyl cysteine" evidence="1">
    <location>
        <position position="18"/>
    </location>
</feature>
<feature type="lipid moiety-binding region" description="S-diacylglycerol cysteine" evidence="1">
    <location>
        <position position="18"/>
    </location>
</feature>
<protein>
    <recommendedName>
        <fullName>Uncharacterized lipoprotein SAS2259</fullName>
    </recommendedName>
</protein>
<dbReference type="EMBL" id="BX571857">
    <property type="protein sequence ID" value="CAG44072.1"/>
    <property type="molecule type" value="Genomic_DNA"/>
</dbReference>
<dbReference type="RefSeq" id="WP_000826997.1">
    <property type="nucleotide sequence ID" value="NC_002953.3"/>
</dbReference>
<dbReference type="KEGG" id="sas:SAS2259"/>
<dbReference type="HOGENOM" id="CLU_088585_0_0_9"/>
<dbReference type="GO" id="GO:0005886">
    <property type="term" value="C:plasma membrane"/>
    <property type="evidence" value="ECO:0007669"/>
    <property type="project" value="UniProtKB-SubCell"/>
</dbReference>
<dbReference type="PROSITE" id="PS51257">
    <property type="entry name" value="PROKAR_LIPOPROTEIN"/>
    <property type="match status" value="1"/>
</dbReference>
<keyword id="KW-1003">Cell membrane</keyword>
<keyword id="KW-0449">Lipoprotein</keyword>
<keyword id="KW-0472">Membrane</keyword>
<keyword id="KW-0564">Palmitate</keyword>
<keyword id="KW-0732">Signal</keyword>
<name>Y2259_STAAS</name>
<accession>Q6G6V2</accession>
<reference key="1">
    <citation type="journal article" date="2004" name="Proc. Natl. Acad. Sci. U.S.A.">
        <title>Complete genomes of two clinical Staphylococcus aureus strains: evidence for the rapid evolution of virulence and drug resistance.</title>
        <authorList>
            <person name="Holden M.T.G."/>
            <person name="Feil E.J."/>
            <person name="Lindsay J.A."/>
            <person name="Peacock S.J."/>
            <person name="Day N.P.J."/>
            <person name="Enright M.C."/>
            <person name="Foster T.J."/>
            <person name="Moore C.E."/>
            <person name="Hurst L."/>
            <person name="Atkin R."/>
            <person name="Barron A."/>
            <person name="Bason N."/>
            <person name="Bentley S.D."/>
            <person name="Chillingworth C."/>
            <person name="Chillingworth T."/>
            <person name="Churcher C."/>
            <person name="Clark L."/>
            <person name="Corton C."/>
            <person name="Cronin A."/>
            <person name="Doggett J."/>
            <person name="Dowd L."/>
            <person name="Feltwell T."/>
            <person name="Hance Z."/>
            <person name="Harris B."/>
            <person name="Hauser H."/>
            <person name="Holroyd S."/>
            <person name="Jagels K."/>
            <person name="James K.D."/>
            <person name="Lennard N."/>
            <person name="Line A."/>
            <person name="Mayes R."/>
            <person name="Moule S."/>
            <person name="Mungall K."/>
            <person name="Ormond D."/>
            <person name="Quail M.A."/>
            <person name="Rabbinowitsch E."/>
            <person name="Rutherford K.M."/>
            <person name="Sanders M."/>
            <person name="Sharp S."/>
            <person name="Simmonds M."/>
            <person name="Stevens K."/>
            <person name="Whitehead S."/>
            <person name="Barrell B.G."/>
            <person name="Spratt B.G."/>
            <person name="Parkhill J."/>
        </authorList>
    </citation>
    <scope>NUCLEOTIDE SEQUENCE [LARGE SCALE GENOMIC DNA]</scope>
    <source>
        <strain>MSSA476</strain>
    </source>
</reference>
<comment type="subcellular location">
    <subcellularLocation>
        <location evidence="1">Cell membrane</location>
        <topology evidence="1">Lipid-anchor</topology>
    </subcellularLocation>
</comment>
<proteinExistence type="inferred from homology"/>
<sequence>MKRLVTGLLALSLFLAACGQDSDQQKDGNKEKDDKAKTEQQDKKTNDSSKDKKDNKDDSKDVNKDNKDNSANDNQQQSNSNATNNDQNQTNNNQANNNQKSSYVAPYYGQNAAPVARQIYPFNGNKTQALQQLPNFQTALNAANNEANKFGSNNKVYNDYSIEEHNGNYKYVFSFKDPNANGKYSIVTVDYTGQAMVTDPNYQQ</sequence>
<organism>
    <name type="scientific">Staphylococcus aureus (strain MSSA476)</name>
    <dbReference type="NCBI Taxonomy" id="282459"/>
    <lineage>
        <taxon>Bacteria</taxon>
        <taxon>Bacillati</taxon>
        <taxon>Bacillota</taxon>
        <taxon>Bacilli</taxon>
        <taxon>Bacillales</taxon>
        <taxon>Staphylococcaceae</taxon>
        <taxon>Staphylococcus</taxon>
    </lineage>
</organism>
<gene>
    <name type="ordered locus">SAS2259</name>
</gene>